<evidence type="ECO:0000250" key="1">
    <source>
        <dbReference type="UniProtKB" id="Q8K0T2"/>
    </source>
</evidence>
<evidence type="ECO:0000250" key="2">
    <source>
        <dbReference type="UniProtKB" id="Q8TCX1"/>
    </source>
</evidence>
<evidence type="ECO:0000256" key="3">
    <source>
        <dbReference type="SAM" id="MobiDB-lite"/>
    </source>
</evidence>
<evidence type="ECO:0000305" key="4"/>
<keyword id="KW-0966">Cell projection</keyword>
<keyword id="KW-0969">Cilium</keyword>
<keyword id="KW-0970">Cilium biogenesis/degradation</keyword>
<keyword id="KW-0963">Cytoplasm</keyword>
<keyword id="KW-0206">Cytoskeleton</keyword>
<keyword id="KW-0217">Developmental protein</keyword>
<keyword id="KW-0243">Dynein</keyword>
<keyword id="KW-0493">Microtubule</keyword>
<keyword id="KW-0505">Motor protein</keyword>
<keyword id="KW-1185">Reference proteome</keyword>
<proteinExistence type="evidence at transcript level"/>
<comment type="function">
    <text evidence="2">Acts as one of several non-catalytic accessory components of the cytoplasmic dynein 2 complex (dynein-2 complex), a motor protein complex that drives the movement of cargos along microtubules within cilia and flagella in concert with the intraflagellar transport (IFT) system, facilitating the assembly of these organelles.</text>
</comment>
<comment type="subunit">
    <text evidence="2">Light intermediate chain of the cytoplasmic dynein complex 2, a multisubunit complex composed at least of eleven different proteins. The cytoplasmic dynein 2 complex consists of two catalytic heavy chains (HCs) and a number of non-catalytic subunits presented by intermediate chains (ICs), light intermediate chains (LICs) and light chains (LCs). Among them, a heavy chain (DYNC2H1), two intermediate chains (DYNC2I2 and DYNC2I1), a light intermediate chain (DYNC2LI1), and a light chain (DYNLT2B) are unique to the dynein-2 complex, but a subset of light chains are also shared by dynein-1 and dynein-2 complexes. Dynein-2 complex is built around two copies of cytoplasmic dynein 2 heavy chain 1 (DYNC2H1). The C-terminal region forms the motor domain, which converts the energy from ATP hydrolysis into movement. Its N-terminal region forms the tail, an extended structure that binds the other subunits and holds the two heavy chains in a homodimer.</text>
</comment>
<comment type="subcellular location">
    <subcellularLocation>
        <location evidence="2">Cytoplasm</location>
    </subcellularLocation>
    <subcellularLocation>
        <location evidence="2">Cell projection</location>
        <location evidence="2">Cilium</location>
    </subcellularLocation>
    <subcellularLocation>
        <location evidence="2">Cytoplasm</location>
        <location evidence="2">Cytoskeleton</location>
        <location evidence="2">Cilium basal body</location>
    </subcellularLocation>
    <subcellularLocation>
        <location evidence="1">Cytoplasm</location>
        <location evidence="1">Cytoskeleton</location>
        <location evidence="1">Cilium axoneme</location>
    </subcellularLocation>
    <subcellularLocation>
        <location evidence="2">Cytoplasm</location>
        <location evidence="2">Cytoskeleton</location>
        <location evidence="2">Microtubule organizing center</location>
        <location evidence="2">Centrosome</location>
    </subcellularLocation>
    <text evidence="1">Localizes to the apical cytoplasm.</text>
</comment>
<comment type="similarity">
    <text evidence="4">Belongs to the dynein light intermediate chain family.</text>
</comment>
<sequence length="358" mass="40189">MPKVSSDTLWDIAAAEVRSRESRTDEEEAEEEDAHFPSQRTVFFMGSKAGGKTTILLRFLERDETAKPTLALEYTFGRRARGHNTPKDIAHLWELGGGISLSDLVQIPITADNVSFLSVVLVLDLSKPNALWETMESLLGSARNQVEKVCAALQKTGESRSGKQRVPRVLHKDYPDRELISPFPVPLLIVGSKFDIFQDFDSEKRKVICKTLRFLAHFYGASLIFTSSKSETTMSKSRSFINQLAFGTERPKSISTDPSKPLAIPAGSDSLSQIGPPVATEVDIGTLHAKNPFDLWKKVFEKVFPHESTRERKELKDPVKDPQFSEPLIDSIRAQKDQELDQYKREQAKSWKSLALDP</sequence>
<protein>
    <recommendedName>
        <fullName>Cytoplasmic dynein 2 light intermediate chain 1</fullName>
    </recommendedName>
</protein>
<organism>
    <name type="scientific">Danio rerio</name>
    <name type="common">Zebrafish</name>
    <name type="synonym">Brachydanio rerio</name>
    <dbReference type="NCBI Taxonomy" id="7955"/>
    <lineage>
        <taxon>Eukaryota</taxon>
        <taxon>Metazoa</taxon>
        <taxon>Chordata</taxon>
        <taxon>Craniata</taxon>
        <taxon>Vertebrata</taxon>
        <taxon>Euteleostomi</taxon>
        <taxon>Actinopterygii</taxon>
        <taxon>Neopterygii</taxon>
        <taxon>Teleostei</taxon>
        <taxon>Ostariophysi</taxon>
        <taxon>Cypriniformes</taxon>
        <taxon>Danionidae</taxon>
        <taxon>Danioninae</taxon>
        <taxon>Danio</taxon>
    </lineage>
</organism>
<gene>
    <name type="primary">dync2li1</name>
    <name type="ORF">zgc:63673</name>
</gene>
<accession>Q7SXY4</accession>
<reference key="1">
    <citation type="submission" date="2003-07" db="EMBL/GenBank/DDBJ databases">
        <authorList>
            <consortium name="NIH - Zebrafish Gene Collection (ZGC) project"/>
        </authorList>
    </citation>
    <scope>NUCLEOTIDE SEQUENCE [LARGE SCALE MRNA]</scope>
    <source>
        <strain>SJD</strain>
    </source>
</reference>
<feature type="chain" id="PRO_0000318753" description="Cytoplasmic dynein 2 light intermediate chain 1">
    <location>
        <begin position="1"/>
        <end position="358"/>
    </location>
</feature>
<feature type="region of interest" description="Disordered" evidence="3">
    <location>
        <begin position="1"/>
        <end position="35"/>
    </location>
</feature>
<feature type="region of interest" description="Disordered" evidence="3">
    <location>
        <begin position="307"/>
        <end position="358"/>
    </location>
</feature>
<feature type="compositionally biased region" description="Acidic residues" evidence="3">
    <location>
        <begin position="24"/>
        <end position="33"/>
    </location>
</feature>
<feature type="compositionally biased region" description="Basic and acidic residues" evidence="3">
    <location>
        <begin position="307"/>
        <end position="320"/>
    </location>
</feature>
<feature type="compositionally biased region" description="Basic and acidic residues" evidence="3">
    <location>
        <begin position="333"/>
        <end position="349"/>
    </location>
</feature>
<dbReference type="EMBL" id="BC055198">
    <property type="protein sequence ID" value="AAH55198.1"/>
    <property type="molecule type" value="mRNA"/>
</dbReference>
<dbReference type="RefSeq" id="NP_956774.1">
    <property type="nucleotide sequence ID" value="NM_200480.1"/>
</dbReference>
<dbReference type="SMR" id="Q7SXY4"/>
<dbReference type="FunCoup" id="Q7SXY4">
    <property type="interactions" value="406"/>
</dbReference>
<dbReference type="STRING" id="7955.ENSDARP00000058146"/>
<dbReference type="PaxDb" id="7955-ENSDARP00000058146"/>
<dbReference type="GeneID" id="393452"/>
<dbReference type="KEGG" id="dre:393452"/>
<dbReference type="AGR" id="ZFIN:ZDB-GENE-040426-1230"/>
<dbReference type="CTD" id="51626"/>
<dbReference type="ZFIN" id="ZDB-GENE-040426-1230">
    <property type="gene designation" value="dync2li1"/>
</dbReference>
<dbReference type="eggNOG" id="KOG3929">
    <property type="taxonomic scope" value="Eukaryota"/>
</dbReference>
<dbReference type="InParanoid" id="Q7SXY4"/>
<dbReference type="OrthoDB" id="10263060at2759"/>
<dbReference type="PhylomeDB" id="Q7SXY4"/>
<dbReference type="PRO" id="PR:Q7SXY4"/>
<dbReference type="Proteomes" id="UP000000437">
    <property type="component" value="Alternate scaffold 13"/>
</dbReference>
<dbReference type="Proteomes" id="UP000000437">
    <property type="component" value="Chromosome 13"/>
</dbReference>
<dbReference type="GO" id="GO:0005930">
    <property type="term" value="C:axoneme"/>
    <property type="evidence" value="ECO:0000318"/>
    <property type="project" value="GO_Central"/>
</dbReference>
<dbReference type="GO" id="GO:0005813">
    <property type="term" value="C:centrosome"/>
    <property type="evidence" value="ECO:0007669"/>
    <property type="project" value="UniProtKB-SubCell"/>
</dbReference>
<dbReference type="GO" id="GO:0036064">
    <property type="term" value="C:ciliary basal body"/>
    <property type="evidence" value="ECO:0000318"/>
    <property type="project" value="GO_Central"/>
</dbReference>
<dbReference type="GO" id="GO:0005868">
    <property type="term" value="C:cytoplasmic dynein complex"/>
    <property type="evidence" value="ECO:0000250"/>
    <property type="project" value="UniProtKB"/>
</dbReference>
<dbReference type="GO" id="GO:0005874">
    <property type="term" value="C:microtubule"/>
    <property type="evidence" value="ECO:0007669"/>
    <property type="project" value="UniProtKB-KW"/>
</dbReference>
<dbReference type="GO" id="GO:0097730">
    <property type="term" value="C:non-motile cilium"/>
    <property type="evidence" value="ECO:0000315"/>
    <property type="project" value="ZFIN"/>
</dbReference>
<dbReference type="GO" id="GO:0045504">
    <property type="term" value="F:dynein heavy chain binding"/>
    <property type="evidence" value="ECO:0000250"/>
    <property type="project" value="UniProtKB"/>
</dbReference>
<dbReference type="GO" id="GO:0035721">
    <property type="term" value="P:intraciliary retrograde transport"/>
    <property type="evidence" value="ECO:0000318"/>
    <property type="project" value="GO_Central"/>
</dbReference>
<dbReference type="GO" id="GO:0042073">
    <property type="term" value="P:intraciliary transport"/>
    <property type="evidence" value="ECO:0000315"/>
    <property type="project" value="ZFIN"/>
</dbReference>
<dbReference type="GO" id="GO:0035735">
    <property type="term" value="P:intraciliary transport involved in cilium assembly"/>
    <property type="evidence" value="ECO:0000318"/>
    <property type="project" value="GO_Central"/>
</dbReference>
<dbReference type="Gene3D" id="3.40.50.300">
    <property type="entry name" value="P-loop containing nucleotide triphosphate hydrolases"/>
    <property type="match status" value="1"/>
</dbReference>
<dbReference type="InterPro" id="IPR040045">
    <property type="entry name" value="DYNC2LI1"/>
</dbReference>
<dbReference type="InterPro" id="IPR022780">
    <property type="entry name" value="Dynein_light_int_chain"/>
</dbReference>
<dbReference type="InterPro" id="IPR027417">
    <property type="entry name" value="P-loop_NTPase"/>
</dbReference>
<dbReference type="PANTHER" id="PTHR13236:SF0">
    <property type="entry name" value="CYTOPLASMIC DYNEIN 2 LIGHT INTERMEDIATE CHAIN 1"/>
    <property type="match status" value="1"/>
</dbReference>
<dbReference type="PANTHER" id="PTHR13236">
    <property type="entry name" value="DYNEIN 2 LIGHT INTERMEDIATE CHAIN, ISOFORM 2"/>
    <property type="match status" value="1"/>
</dbReference>
<dbReference type="Pfam" id="PF05783">
    <property type="entry name" value="DLIC"/>
    <property type="match status" value="1"/>
</dbReference>
<dbReference type="SUPFAM" id="SSF52540">
    <property type="entry name" value="P-loop containing nucleoside triphosphate hydrolases"/>
    <property type="match status" value="1"/>
</dbReference>
<name>DC2L1_DANRE</name>